<protein>
    <recommendedName>
        <fullName evidence="1">TATA-box-binding protein</fullName>
    </recommendedName>
    <alternativeName>
        <fullName evidence="1">Box A-binding protein</fullName>
        <shortName evidence="1">BAP</shortName>
    </alternativeName>
    <alternativeName>
        <fullName evidence="1">TATA sequence-binding protein</fullName>
        <shortName evidence="1">TBP</shortName>
    </alternativeName>
    <alternativeName>
        <fullName evidence="1">TATA-box factor</fullName>
    </alternativeName>
</protein>
<evidence type="ECO:0000255" key="1">
    <source>
        <dbReference type="HAMAP-Rule" id="MF_00408"/>
    </source>
</evidence>
<accession>A6URP5</accession>
<reference key="1">
    <citation type="submission" date="2007-06" db="EMBL/GenBank/DDBJ databases">
        <title>Complete sequence of Methanococcus vannielii SB.</title>
        <authorList>
            <consortium name="US DOE Joint Genome Institute"/>
            <person name="Copeland A."/>
            <person name="Lucas S."/>
            <person name="Lapidus A."/>
            <person name="Barry K."/>
            <person name="Glavina del Rio T."/>
            <person name="Dalin E."/>
            <person name="Tice H."/>
            <person name="Pitluck S."/>
            <person name="Chain P."/>
            <person name="Malfatti S."/>
            <person name="Shin M."/>
            <person name="Vergez L."/>
            <person name="Schmutz J."/>
            <person name="Larimer F."/>
            <person name="Land M."/>
            <person name="Hauser L."/>
            <person name="Kyrpides N."/>
            <person name="Anderson I."/>
            <person name="Sieprawska-Lupa M."/>
            <person name="Whitman W.B."/>
            <person name="Richardson P."/>
        </authorList>
    </citation>
    <scope>NUCLEOTIDE SEQUENCE [LARGE SCALE GENOMIC DNA]</scope>
    <source>
        <strain>ATCC 35089 / DSM 1224 / JCM 13029 / OCM 148 / SB</strain>
    </source>
</reference>
<comment type="function">
    <text evidence="1">General factor that plays a role in the activation of archaeal genes transcribed by RNA polymerase. Binds specifically to the TATA box promoter element which lies close to the position of transcription initiation.</text>
</comment>
<comment type="similarity">
    <text evidence="1">Belongs to the TBP family.</text>
</comment>
<gene>
    <name evidence="1" type="primary">tbp</name>
    <name type="ordered locus">Mevan_1270</name>
</gene>
<dbReference type="EMBL" id="CP000742">
    <property type="protein sequence ID" value="ABR55167.1"/>
    <property type="molecule type" value="Genomic_DNA"/>
</dbReference>
<dbReference type="RefSeq" id="WP_012066082.1">
    <property type="nucleotide sequence ID" value="NC_009634.1"/>
</dbReference>
<dbReference type="SMR" id="A6URP5"/>
<dbReference type="STRING" id="406327.Mevan_1270"/>
<dbReference type="GeneID" id="5324704"/>
<dbReference type="KEGG" id="mvn:Mevan_1270"/>
<dbReference type="eggNOG" id="arCOG01764">
    <property type="taxonomic scope" value="Archaea"/>
</dbReference>
<dbReference type="HOGENOM" id="CLU_060161_4_3_2"/>
<dbReference type="OrthoDB" id="350539at2157"/>
<dbReference type="Proteomes" id="UP000001107">
    <property type="component" value="Chromosome"/>
</dbReference>
<dbReference type="GO" id="GO:0003677">
    <property type="term" value="F:DNA binding"/>
    <property type="evidence" value="ECO:0007669"/>
    <property type="project" value="UniProtKB-KW"/>
</dbReference>
<dbReference type="GO" id="GO:0003700">
    <property type="term" value="F:DNA-binding transcription factor activity"/>
    <property type="evidence" value="ECO:0007669"/>
    <property type="project" value="UniProtKB-UniRule"/>
</dbReference>
<dbReference type="GO" id="GO:0006352">
    <property type="term" value="P:DNA-templated transcription initiation"/>
    <property type="evidence" value="ECO:0007669"/>
    <property type="project" value="InterPro"/>
</dbReference>
<dbReference type="CDD" id="cd04518">
    <property type="entry name" value="TBP_archaea"/>
    <property type="match status" value="1"/>
</dbReference>
<dbReference type="FunFam" id="3.30.310.10:FF:000007">
    <property type="entry name" value="TATA-box-binding protein"/>
    <property type="match status" value="1"/>
</dbReference>
<dbReference type="FunFam" id="3.30.310.10:FF:000010">
    <property type="entry name" value="TATA-box-binding protein"/>
    <property type="match status" value="1"/>
</dbReference>
<dbReference type="Gene3D" id="3.30.310.10">
    <property type="entry name" value="TATA-Binding Protein"/>
    <property type="match status" value="2"/>
</dbReference>
<dbReference type="HAMAP" id="MF_00408">
    <property type="entry name" value="TATA_bind_prot_arch"/>
    <property type="match status" value="1"/>
</dbReference>
<dbReference type="InterPro" id="IPR000814">
    <property type="entry name" value="TBP"/>
</dbReference>
<dbReference type="InterPro" id="IPR033711">
    <property type="entry name" value="TBP_archaea"/>
</dbReference>
<dbReference type="InterPro" id="IPR030491">
    <property type="entry name" value="TBP_CS"/>
</dbReference>
<dbReference type="InterPro" id="IPR012295">
    <property type="entry name" value="TBP_dom_sf"/>
</dbReference>
<dbReference type="NCBIfam" id="NF001593">
    <property type="entry name" value="PRK00394.1-2"/>
    <property type="match status" value="1"/>
</dbReference>
<dbReference type="NCBIfam" id="NF001594">
    <property type="entry name" value="PRK00394.1-3"/>
    <property type="match status" value="1"/>
</dbReference>
<dbReference type="PANTHER" id="PTHR10126">
    <property type="entry name" value="TATA-BOX BINDING PROTEIN"/>
    <property type="match status" value="1"/>
</dbReference>
<dbReference type="Pfam" id="PF00352">
    <property type="entry name" value="TBP"/>
    <property type="match status" value="2"/>
</dbReference>
<dbReference type="PRINTS" id="PR00686">
    <property type="entry name" value="TIFACTORIID"/>
</dbReference>
<dbReference type="SUPFAM" id="SSF55945">
    <property type="entry name" value="TATA-box binding protein-like"/>
    <property type="match status" value="2"/>
</dbReference>
<dbReference type="PROSITE" id="PS00351">
    <property type="entry name" value="TFIID"/>
    <property type="match status" value="2"/>
</dbReference>
<organism>
    <name type="scientific">Methanococcus vannielii (strain ATCC 35089 / DSM 1224 / JCM 13029 / OCM 148 / SB)</name>
    <dbReference type="NCBI Taxonomy" id="406327"/>
    <lineage>
        <taxon>Archaea</taxon>
        <taxon>Methanobacteriati</taxon>
        <taxon>Methanobacteriota</taxon>
        <taxon>Methanomada group</taxon>
        <taxon>Methanococci</taxon>
        <taxon>Methanococcales</taxon>
        <taxon>Methanococcaceae</taxon>
        <taxon>Methanococcus</taxon>
    </lineage>
</organism>
<name>TBP_METVS</name>
<keyword id="KW-0238">DNA-binding</keyword>
<keyword id="KW-0677">Repeat</keyword>
<keyword id="KW-0804">Transcription</keyword>
<keyword id="KW-0805">Transcription regulation</keyword>
<sequence>MEPEIKIVNVVVSTQIGTDIDLEYAADILDNAEYEPEQFPGLVCRLSDPKVALLIFRSGKLNCTGAKSKEDAEIAIKKIIKELKEAGMEIIDNPVVSVQNMVATTELGMEPNLDDISTLECTEYEPEQFPGLVYRLSDPKVVVLIFGSGKVVITGLKVIEDAYIAFDKISATLKELEQELY</sequence>
<proteinExistence type="inferred from homology"/>
<feature type="chain" id="PRO_1000049884" description="TATA-box-binding protein">
    <location>
        <begin position="1"/>
        <end position="181"/>
    </location>
</feature>
<feature type="repeat" description="1">
    <location>
        <begin position="7"/>
        <end position="83"/>
    </location>
</feature>
<feature type="repeat" description="2">
    <location>
        <begin position="98"/>
        <end position="173"/>
    </location>
</feature>